<protein>
    <recommendedName>
        <fullName evidence="1">tRNA-specific 2-thiouridylase MnmA</fullName>
        <ecNumber evidence="1">2.8.1.13</ecNumber>
    </recommendedName>
</protein>
<organism>
    <name type="scientific">Corynebacterium glutamicum (strain R)</name>
    <dbReference type="NCBI Taxonomy" id="340322"/>
    <lineage>
        <taxon>Bacteria</taxon>
        <taxon>Bacillati</taxon>
        <taxon>Actinomycetota</taxon>
        <taxon>Actinomycetes</taxon>
        <taxon>Mycobacteriales</taxon>
        <taxon>Corynebacteriaceae</taxon>
        <taxon>Corynebacterium</taxon>
    </lineage>
</organism>
<sequence>MRVLAAMSGGVDSAVAASRAVAAGHEVVGVHLALSQDPQTVRESSRGCCSLEDSADARRVCDKLGIPFYVWDFSDRFKEDVIDNFIDSYAIGETPNPCLRCNEKIKFAALLERGIALGFDAVVTGHYARLTQPADGGDGYLRRGVDPNKDQSYVLGVLGAHEIEHCMFPVGDTIKPEIREEASAAGFSVAKKPDSYDICFIPDGNTQAFLGKHIGMRPGMIVDQEGTQLREHAGVHEFTIGQRKGLDIKAPAADGRPRYVTDIDAKTGTVTVGTRENLKISTIHADRLKFLHPAMDGQIDCEVQVRAHGGVVSCSATIDRDADFMVLNLNEPLQGVARGQAAVLYLPDADGDIVLGSGTICHTES</sequence>
<evidence type="ECO:0000255" key="1">
    <source>
        <dbReference type="HAMAP-Rule" id="MF_00144"/>
    </source>
</evidence>
<reference key="1">
    <citation type="journal article" date="2007" name="Microbiology">
        <title>Comparative analysis of the Corynebacterium glutamicum group and complete genome sequence of strain R.</title>
        <authorList>
            <person name="Yukawa H."/>
            <person name="Omumasaba C.A."/>
            <person name="Nonaka H."/>
            <person name="Kos P."/>
            <person name="Okai N."/>
            <person name="Suzuki N."/>
            <person name="Suda M."/>
            <person name="Tsuge Y."/>
            <person name="Watanabe J."/>
            <person name="Ikeda Y."/>
            <person name="Vertes A.A."/>
            <person name="Inui M."/>
        </authorList>
    </citation>
    <scope>NUCLEOTIDE SEQUENCE [LARGE SCALE GENOMIC DNA]</scope>
    <source>
        <strain>R</strain>
    </source>
</reference>
<accession>A4QDK1</accession>
<comment type="function">
    <text evidence="1">Catalyzes the 2-thiolation of uridine at the wobble position (U34) of tRNA, leading to the formation of s(2)U34.</text>
</comment>
<comment type="catalytic activity">
    <reaction evidence="1">
        <text>S-sulfanyl-L-cysteinyl-[protein] + uridine(34) in tRNA + AH2 + ATP = 2-thiouridine(34) in tRNA + L-cysteinyl-[protein] + A + AMP + diphosphate + H(+)</text>
        <dbReference type="Rhea" id="RHEA:47032"/>
        <dbReference type="Rhea" id="RHEA-COMP:10131"/>
        <dbReference type="Rhea" id="RHEA-COMP:11726"/>
        <dbReference type="Rhea" id="RHEA-COMP:11727"/>
        <dbReference type="Rhea" id="RHEA-COMP:11728"/>
        <dbReference type="ChEBI" id="CHEBI:13193"/>
        <dbReference type="ChEBI" id="CHEBI:15378"/>
        <dbReference type="ChEBI" id="CHEBI:17499"/>
        <dbReference type="ChEBI" id="CHEBI:29950"/>
        <dbReference type="ChEBI" id="CHEBI:30616"/>
        <dbReference type="ChEBI" id="CHEBI:33019"/>
        <dbReference type="ChEBI" id="CHEBI:61963"/>
        <dbReference type="ChEBI" id="CHEBI:65315"/>
        <dbReference type="ChEBI" id="CHEBI:87170"/>
        <dbReference type="ChEBI" id="CHEBI:456215"/>
        <dbReference type="EC" id="2.8.1.13"/>
    </reaction>
</comment>
<comment type="subcellular location">
    <subcellularLocation>
        <location evidence="1">Cytoplasm</location>
    </subcellularLocation>
</comment>
<comment type="similarity">
    <text evidence="1">Belongs to the MnmA/TRMU family.</text>
</comment>
<feature type="chain" id="PRO_1000009519" description="tRNA-specific 2-thiouridylase MnmA">
    <location>
        <begin position="1"/>
        <end position="365"/>
    </location>
</feature>
<feature type="region of interest" description="Interaction with tRNA" evidence="1">
    <location>
        <begin position="149"/>
        <end position="151"/>
    </location>
</feature>
<feature type="active site" description="Nucleophile" evidence="1">
    <location>
        <position position="101"/>
    </location>
</feature>
<feature type="active site" description="Cysteine persulfide intermediate" evidence="1">
    <location>
        <position position="199"/>
    </location>
</feature>
<feature type="binding site" evidence="1">
    <location>
        <begin position="6"/>
        <end position="13"/>
    </location>
    <ligand>
        <name>ATP</name>
        <dbReference type="ChEBI" id="CHEBI:30616"/>
    </ligand>
</feature>
<feature type="binding site" evidence="1">
    <location>
        <position position="32"/>
    </location>
    <ligand>
        <name>ATP</name>
        <dbReference type="ChEBI" id="CHEBI:30616"/>
    </ligand>
</feature>
<feature type="binding site" evidence="1">
    <location>
        <position position="125"/>
    </location>
    <ligand>
        <name>ATP</name>
        <dbReference type="ChEBI" id="CHEBI:30616"/>
    </ligand>
</feature>
<feature type="site" description="Interaction with tRNA" evidence="1">
    <location>
        <position position="126"/>
    </location>
</feature>
<feature type="site" description="Interaction with tRNA" evidence="1">
    <location>
        <position position="340"/>
    </location>
</feature>
<feature type="disulfide bond" description="Alternate" evidence="1">
    <location>
        <begin position="101"/>
        <end position="199"/>
    </location>
</feature>
<gene>
    <name evidence="1" type="primary">mnmA</name>
    <name type="synonym">trmU</name>
    <name type="ordered locus">cgR_1317</name>
</gene>
<dbReference type="EC" id="2.8.1.13" evidence="1"/>
<dbReference type="EMBL" id="AP009044">
    <property type="protein sequence ID" value="BAF54298.1"/>
    <property type="molecule type" value="Genomic_DNA"/>
</dbReference>
<dbReference type="RefSeq" id="WP_003861382.1">
    <property type="nucleotide sequence ID" value="NC_009342.1"/>
</dbReference>
<dbReference type="SMR" id="A4QDK1"/>
<dbReference type="GeneID" id="1019222"/>
<dbReference type="KEGG" id="cgt:cgR_1317"/>
<dbReference type="HOGENOM" id="CLU_035188_0_2_11"/>
<dbReference type="PhylomeDB" id="A4QDK1"/>
<dbReference type="Proteomes" id="UP000006698">
    <property type="component" value="Chromosome"/>
</dbReference>
<dbReference type="GO" id="GO:0005737">
    <property type="term" value="C:cytoplasm"/>
    <property type="evidence" value="ECO:0007669"/>
    <property type="project" value="UniProtKB-SubCell"/>
</dbReference>
<dbReference type="GO" id="GO:0005524">
    <property type="term" value="F:ATP binding"/>
    <property type="evidence" value="ECO:0007669"/>
    <property type="project" value="UniProtKB-KW"/>
</dbReference>
<dbReference type="GO" id="GO:0000049">
    <property type="term" value="F:tRNA binding"/>
    <property type="evidence" value="ECO:0007669"/>
    <property type="project" value="UniProtKB-KW"/>
</dbReference>
<dbReference type="GO" id="GO:0103016">
    <property type="term" value="F:tRNA-uridine 2-sulfurtransferase activity"/>
    <property type="evidence" value="ECO:0007669"/>
    <property type="project" value="UniProtKB-EC"/>
</dbReference>
<dbReference type="GO" id="GO:0002143">
    <property type="term" value="P:tRNA wobble position uridine thiolation"/>
    <property type="evidence" value="ECO:0007669"/>
    <property type="project" value="TreeGrafter"/>
</dbReference>
<dbReference type="CDD" id="cd01998">
    <property type="entry name" value="MnmA_TRMU-like"/>
    <property type="match status" value="1"/>
</dbReference>
<dbReference type="FunFam" id="2.30.30.280:FF:000001">
    <property type="entry name" value="tRNA-specific 2-thiouridylase MnmA"/>
    <property type="match status" value="1"/>
</dbReference>
<dbReference type="FunFam" id="3.40.50.620:FF:000057">
    <property type="entry name" value="tRNA-specific 2-thiouridylase MnmA"/>
    <property type="match status" value="1"/>
</dbReference>
<dbReference type="Gene3D" id="2.30.30.280">
    <property type="entry name" value="Adenine nucleotide alpha hydrolases-like domains"/>
    <property type="match status" value="1"/>
</dbReference>
<dbReference type="Gene3D" id="3.40.50.620">
    <property type="entry name" value="HUPs"/>
    <property type="match status" value="1"/>
</dbReference>
<dbReference type="Gene3D" id="2.40.30.10">
    <property type="entry name" value="Translation factors"/>
    <property type="match status" value="1"/>
</dbReference>
<dbReference type="HAMAP" id="MF_00144">
    <property type="entry name" value="tRNA_thiouridyl_MnmA"/>
    <property type="match status" value="1"/>
</dbReference>
<dbReference type="InterPro" id="IPR004506">
    <property type="entry name" value="MnmA-like"/>
</dbReference>
<dbReference type="InterPro" id="IPR046885">
    <property type="entry name" value="MnmA-like_C"/>
</dbReference>
<dbReference type="InterPro" id="IPR046884">
    <property type="entry name" value="MnmA-like_central"/>
</dbReference>
<dbReference type="InterPro" id="IPR023382">
    <property type="entry name" value="MnmA-like_central_sf"/>
</dbReference>
<dbReference type="InterPro" id="IPR014729">
    <property type="entry name" value="Rossmann-like_a/b/a_fold"/>
</dbReference>
<dbReference type="NCBIfam" id="NF001138">
    <property type="entry name" value="PRK00143.1"/>
    <property type="match status" value="1"/>
</dbReference>
<dbReference type="NCBIfam" id="TIGR00420">
    <property type="entry name" value="trmU"/>
    <property type="match status" value="1"/>
</dbReference>
<dbReference type="PANTHER" id="PTHR11933:SF5">
    <property type="entry name" value="MITOCHONDRIAL TRNA-SPECIFIC 2-THIOURIDYLASE 1"/>
    <property type="match status" value="1"/>
</dbReference>
<dbReference type="PANTHER" id="PTHR11933">
    <property type="entry name" value="TRNA 5-METHYLAMINOMETHYL-2-THIOURIDYLATE -METHYLTRANSFERASE"/>
    <property type="match status" value="1"/>
</dbReference>
<dbReference type="Pfam" id="PF03054">
    <property type="entry name" value="tRNA_Me_trans"/>
    <property type="match status" value="1"/>
</dbReference>
<dbReference type="Pfam" id="PF20258">
    <property type="entry name" value="tRNA_Me_trans_C"/>
    <property type="match status" value="1"/>
</dbReference>
<dbReference type="Pfam" id="PF20259">
    <property type="entry name" value="tRNA_Me_trans_M"/>
    <property type="match status" value="1"/>
</dbReference>
<dbReference type="SUPFAM" id="SSF52402">
    <property type="entry name" value="Adenine nucleotide alpha hydrolases-like"/>
    <property type="match status" value="1"/>
</dbReference>
<proteinExistence type="inferred from homology"/>
<keyword id="KW-0067">ATP-binding</keyword>
<keyword id="KW-0963">Cytoplasm</keyword>
<keyword id="KW-1015">Disulfide bond</keyword>
<keyword id="KW-0547">Nucleotide-binding</keyword>
<keyword id="KW-0694">RNA-binding</keyword>
<keyword id="KW-0808">Transferase</keyword>
<keyword id="KW-0819">tRNA processing</keyword>
<keyword id="KW-0820">tRNA-binding</keyword>
<name>MNMA_CORGB</name>